<sequence>MAGKGEGPAIGIDLGTTYSCVGVWQHDRVEIIANDQGNRTTPSYVGFTDSERLIGDAAKNQVAMNPINTVFDAKRLIGRRFSDASVQSDMKLWPFKVIPGPGDKPMIVVNYKGEEKQFSAEEISSMVLIKMKEIAEAFLGTTVKNAVVTVPAYSNDSQRQATKDAGVISGLNVMRIINEPTAAAIAYGLDKKATSVGEKNVLIFDLGGGTFDVSLLTIEEGIFEVKATAGDTHLGGEDFDNRMVNHFVQEFKRKNKKDITGNPRALRRLRTACERAKRTLSSTAQTTIEIDSLYEGIDFYSTITRARFEELNMDLFRKCMEPVEKCLRDAKMDKSTVHDVVLVGGSTRIPKVQQLLQDFFNGKELCKSINPDEAVAYGAAVQAAILSGEGNEKVQDLLLLDVTPLSLGLETAGGVMTVLIPRNTTIPTKKEQVFSTYSDNQPGVLIQVYEGERTRTRDNNLLGKFELSGIPPAPRGVPQITVCFDIDANGTLNVSAEDKTTGQKNKITITNDKGRLSKEEIEKMVQEAEKYKSEDEEHKKKVEAKNALENYAYNMRNTIKDEKIASKLSADDRTKIEDAIEQAIQWLDGNQLAEAEEFEDKMKELESLCNPIIAKMYQGAGGDMDDEGPAPSGGGAGPKIEEVD</sequence>
<accession>P27322</accession>
<name>HSP72_SOLLC</name>
<feature type="chain" id="PRO_0000078351" description="Heat shock cognate 70 kDa protein 2">
    <location>
        <begin position="1"/>
        <end position="644"/>
    </location>
</feature>
<feature type="region of interest" description="Disordered" evidence="1">
    <location>
        <begin position="618"/>
        <end position="644"/>
    </location>
</feature>
<proteinExistence type="evidence at transcript level"/>
<protein>
    <recommendedName>
        <fullName>Heat shock cognate 70 kDa protein 2</fullName>
    </recommendedName>
</protein>
<organism>
    <name type="scientific">Solanum lycopersicum</name>
    <name type="common">Tomato</name>
    <name type="synonym">Lycopersicon esculentum</name>
    <dbReference type="NCBI Taxonomy" id="4081"/>
    <lineage>
        <taxon>Eukaryota</taxon>
        <taxon>Viridiplantae</taxon>
        <taxon>Streptophyta</taxon>
        <taxon>Embryophyta</taxon>
        <taxon>Tracheophyta</taxon>
        <taxon>Spermatophyta</taxon>
        <taxon>Magnoliopsida</taxon>
        <taxon>eudicotyledons</taxon>
        <taxon>Gunneridae</taxon>
        <taxon>Pentapetalae</taxon>
        <taxon>asterids</taxon>
        <taxon>lamiids</taxon>
        <taxon>Solanales</taxon>
        <taxon>Solanaceae</taxon>
        <taxon>Solanoideae</taxon>
        <taxon>Solaneae</taxon>
        <taxon>Solanum</taxon>
        <taxon>Solanum subgen. Lycopersicon</taxon>
    </lineage>
</organism>
<evidence type="ECO:0000256" key="1">
    <source>
        <dbReference type="SAM" id="MobiDB-lite"/>
    </source>
</evidence>
<evidence type="ECO:0000305" key="2"/>
<gene>
    <name type="primary">HSC-2</name>
</gene>
<comment type="similarity">
    <text evidence="2">Belongs to the heat shock protein 70 family.</text>
</comment>
<keyword id="KW-0067">ATP-binding</keyword>
<keyword id="KW-0547">Nucleotide-binding</keyword>
<keyword id="KW-1185">Reference proteome</keyword>
<keyword id="KW-0346">Stress response</keyword>
<dbReference type="EMBL" id="X54030">
    <property type="protein sequence ID" value="CAA37971.1"/>
    <property type="molecule type" value="mRNA"/>
</dbReference>
<dbReference type="PIR" id="S14950">
    <property type="entry name" value="S14950"/>
</dbReference>
<dbReference type="RefSeq" id="NP_001334878.1">
    <property type="nucleotide sequence ID" value="NM_001347949.1"/>
</dbReference>
<dbReference type="SMR" id="P27322"/>
<dbReference type="STRING" id="4081.P27322"/>
<dbReference type="PaxDb" id="4081-Solyc10g086410.2.1"/>
<dbReference type="ProMEX" id="P27322"/>
<dbReference type="GeneID" id="101247772"/>
<dbReference type="KEGG" id="sly:101247772"/>
<dbReference type="eggNOG" id="KOG0101">
    <property type="taxonomic scope" value="Eukaryota"/>
</dbReference>
<dbReference type="InParanoid" id="P27322"/>
<dbReference type="OrthoDB" id="3789372at2759"/>
<dbReference type="Proteomes" id="UP000004994">
    <property type="component" value="Unplaced"/>
</dbReference>
<dbReference type="ExpressionAtlas" id="P27322">
    <property type="expression patterns" value="baseline and differential"/>
</dbReference>
<dbReference type="GO" id="GO:0005737">
    <property type="term" value="C:cytoplasm"/>
    <property type="evidence" value="ECO:0000318"/>
    <property type="project" value="GO_Central"/>
</dbReference>
<dbReference type="GO" id="GO:0005524">
    <property type="term" value="F:ATP binding"/>
    <property type="evidence" value="ECO:0007669"/>
    <property type="project" value="UniProtKB-KW"/>
</dbReference>
<dbReference type="GO" id="GO:0016887">
    <property type="term" value="F:ATP hydrolysis activity"/>
    <property type="evidence" value="ECO:0000318"/>
    <property type="project" value="GO_Central"/>
</dbReference>
<dbReference type="GO" id="GO:0140662">
    <property type="term" value="F:ATP-dependent protein folding chaperone"/>
    <property type="evidence" value="ECO:0007669"/>
    <property type="project" value="InterPro"/>
</dbReference>
<dbReference type="GO" id="GO:0031072">
    <property type="term" value="F:heat shock protein binding"/>
    <property type="evidence" value="ECO:0000318"/>
    <property type="project" value="GO_Central"/>
</dbReference>
<dbReference type="GO" id="GO:0044183">
    <property type="term" value="F:protein folding chaperone"/>
    <property type="evidence" value="ECO:0000318"/>
    <property type="project" value="GO_Central"/>
</dbReference>
<dbReference type="GO" id="GO:0051085">
    <property type="term" value="P:chaperone cofactor-dependent protein refolding"/>
    <property type="evidence" value="ECO:0000318"/>
    <property type="project" value="GO_Central"/>
</dbReference>
<dbReference type="GO" id="GO:0042026">
    <property type="term" value="P:protein refolding"/>
    <property type="evidence" value="ECO:0000318"/>
    <property type="project" value="GO_Central"/>
</dbReference>
<dbReference type="CDD" id="cd10233">
    <property type="entry name" value="ASKHA_NBD_HSP70_HSPA1"/>
    <property type="match status" value="1"/>
</dbReference>
<dbReference type="FunFam" id="2.60.34.10:FF:000002">
    <property type="entry name" value="Heat shock 70 kDa"/>
    <property type="match status" value="1"/>
</dbReference>
<dbReference type="FunFam" id="3.90.640.10:FF:000002">
    <property type="entry name" value="Heat shock 70 kDa"/>
    <property type="match status" value="1"/>
</dbReference>
<dbReference type="FunFam" id="1.20.1270.10:FF:000028">
    <property type="entry name" value="Heat shock 70 kDa protein"/>
    <property type="match status" value="1"/>
</dbReference>
<dbReference type="FunFam" id="3.30.30.30:FF:000019">
    <property type="entry name" value="Heat shock 70 kDa protein"/>
    <property type="match status" value="1"/>
</dbReference>
<dbReference type="FunFam" id="3.30.420.40:FF:000172">
    <property type="entry name" value="Heat shock 70 kDa protein"/>
    <property type="match status" value="1"/>
</dbReference>
<dbReference type="FunFam" id="3.30.420.40:FF:000465">
    <property type="entry name" value="Heat shock cognate 70 kDa protein 2"/>
    <property type="match status" value="1"/>
</dbReference>
<dbReference type="FunFam" id="3.30.420.40:FF:000026">
    <property type="entry name" value="Heat shock protein 70"/>
    <property type="match status" value="1"/>
</dbReference>
<dbReference type="Gene3D" id="1.20.1270.10">
    <property type="match status" value="1"/>
</dbReference>
<dbReference type="Gene3D" id="3.30.30.30">
    <property type="match status" value="1"/>
</dbReference>
<dbReference type="Gene3D" id="3.30.420.40">
    <property type="match status" value="2"/>
</dbReference>
<dbReference type="Gene3D" id="3.90.640.10">
    <property type="entry name" value="Actin, Chain A, domain 4"/>
    <property type="match status" value="1"/>
</dbReference>
<dbReference type="Gene3D" id="2.60.34.10">
    <property type="entry name" value="Substrate Binding Domain Of DNAk, Chain A, domain 1"/>
    <property type="match status" value="1"/>
</dbReference>
<dbReference type="InterPro" id="IPR043129">
    <property type="entry name" value="ATPase_NBD"/>
</dbReference>
<dbReference type="InterPro" id="IPR018181">
    <property type="entry name" value="Heat_shock_70_CS"/>
</dbReference>
<dbReference type="InterPro" id="IPR029048">
    <property type="entry name" value="HSP70_C_sf"/>
</dbReference>
<dbReference type="InterPro" id="IPR029047">
    <property type="entry name" value="HSP70_peptide-bd_sf"/>
</dbReference>
<dbReference type="InterPro" id="IPR013126">
    <property type="entry name" value="Hsp_70_fam"/>
</dbReference>
<dbReference type="NCBIfam" id="NF001413">
    <property type="entry name" value="PRK00290.1"/>
    <property type="match status" value="1"/>
</dbReference>
<dbReference type="PANTHER" id="PTHR19375">
    <property type="entry name" value="HEAT SHOCK PROTEIN 70KDA"/>
    <property type="match status" value="1"/>
</dbReference>
<dbReference type="Pfam" id="PF00012">
    <property type="entry name" value="HSP70"/>
    <property type="match status" value="1"/>
</dbReference>
<dbReference type="PRINTS" id="PR00301">
    <property type="entry name" value="HEATSHOCK70"/>
</dbReference>
<dbReference type="SUPFAM" id="SSF53067">
    <property type="entry name" value="Actin-like ATPase domain"/>
    <property type="match status" value="2"/>
</dbReference>
<dbReference type="SUPFAM" id="SSF100934">
    <property type="entry name" value="Heat shock protein 70kD (HSP70), C-terminal subdomain"/>
    <property type="match status" value="1"/>
</dbReference>
<dbReference type="SUPFAM" id="SSF100920">
    <property type="entry name" value="Heat shock protein 70kD (HSP70), peptide-binding domain"/>
    <property type="match status" value="1"/>
</dbReference>
<dbReference type="PROSITE" id="PS00297">
    <property type="entry name" value="HSP70_1"/>
    <property type="match status" value="1"/>
</dbReference>
<dbReference type="PROSITE" id="PS00329">
    <property type="entry name" value="HSP70_2"/>
    <property type="match status" value="1"/>
</dbReference>
<dbReference type="PROSITE" id="PS01036">
    <property type="entry name" value="HSP70_3"/>
    <property type="match status" value="1"/>
</dbReference>
<reference key="1">
    <citation type="journal article" date="1991" name="Plant Mol. Biol.">
        <title>Sequences of two hsc 70 cDNAs from Lycopersicon esculentum.</title>
        <authorList>
            <person name="Lin T.Y."/>
            <person name="Duck N.B."/>
            <person name="Winter J."/>
            <person name="Folk W.R."/>
        </authorList>
    </citation>
    <scope>NUCLEOTIDE SEQUENCE [MRNA]</scope>
    <source>
        <strain>cv. VF36</strain>
        <tissue>Pistil</tissue>
    </source>
</reference>